<comment type="function">
    <text evidence="1">May function in the removal and maintenance of calcium homeostasis. Transports one Ca(2+) and 1 K(+) in exchange for 4 Na(+) (By similarity).</text>
</comment>
<comment type="subcellular location">
    <subcellularLocation>
        <location evidence="2">Membrane</location>
        <topology evidence="2">Multi-pass membrane protein</topology>
    </subcellularLocation>
</comment>
<comment type="RNA editing">
    <location>
        <position position="516" evidence="5 6"/>
    </location>
    <text evidence="6">Partially edited. Target of Adar.</text>
</comment>
<comment type="similarity">
    <text evidence="2">Belongs to the Ca(2+):cation antiporter (CaCA) (TC 2.A.19) family. SLC24A subfamily.</text>
</comment>
<comment type="sequence caution" evidence="7">
    <conflict type="miscellaneous discrepancy">
        <sequence resource="EMBL-CDS" id="AAM11079"/>
    </conflict>
    <text>Intron retention.</text>
</comment>
<evidence type="ECO:0000250" key="1"/>
<evidence type="ECO:0000255" key="2"/>
<evidence type="ECO:0000256" key="3">
    <source>
        <dbReference type="SAM" id="MobiDB-lite"/>
    </source>
</evidence>
<evidence type="ECO:0000269" key="4">
    <source>
    </source>
</evidence>
<evidence type="ECO:0000269" key="5">
    <source>
    </source>
</evidence>
<evidence type="ECO:0000269" key="6">
    <source>
    </source>
</evidence>
<evidence type="ECO:0000305" key="7"/>
<evidence type="ECO:0000312" key="8">
    <source>
        <dbReference type="EMBL" id="AAM11079.1"/>
    </source>
</evidence>
<evidence type="ECO:0000312" key="9">
    <source>
        <dbReference type="EMBL" id="AAN13306.4"/>
    </source>
</evidence>
<gene>
    <name type="ORF">CG1090</name>
</gene>
<protein>
    <recommendedName>
        <fullName>Probable sodium/potassium/calcium exchanger CG1090</fullName>
    </recommendedName>
    <alternativeName>
        <fullName>Na(+)/K(+)/Ca(2+)-exchange protein CG1090</fullName>
    </alternativeName>
</protein>
<reference evidence="9" key="1">
    <citation type="journal article" date="2000" name="Science">
        <title>The genome sequence of Drosophila melanogaster.</title>
        <authorList>
            <person name="Adams M.D."/>
            <person name="Celniker S.E."/>
            <person name="Holt R.A."/>
            <person name="Evans C.A."/>
            <person name="Gocayne J.D."/>
            <person name="Amanatides P.G."/>
            <person name="Scherer S.E."/>
            <person name="Li P.W."/>
            <person name="Hoskins R.A."/>
            <person name="Galle R.F."/>
            <person name="George R.A."/>
            <person name="Lewis S.E."/>
            <person name="Richards S."/>
            <person name="Ashburner M."/>
            <person name="Henderson S.N."/>
            <person name="Sutton G.G."/>
            <person name="Wortman J.R."/>
            <person name="Yandell M.D."/>
            <person name="Zhang Q."/>
            <person name="Chen L.X."/>
            <person name="Brandon R.C."/>
            <person name="Rogers Y.-H.C."/>
            <person name="Blazej R.G."/>
            <person name="Champe M."/>
            <person name="Pfeiffer B.D."/>
            <person name="Wan K.H."/>
            <person name="Doyle C."/>
            <person name="Baxter E.G."/>
            <person name="Helt G."/>
            <person name="Nelson C.R."/>
            <person name="Miklos G.L.G."/>
            <person name="Abril J.F."/>
            <person name="Agbayani A."/>
            <person name="An H.-J."/>
            <person name="Andrews-Pfannkoch C."/>
            <person name="Baldwin D."/>
            <person name="Ballew R.M."/>
            <person name="Basu A."/>
            <person name="Baxendale J."/>
            <person name="Bayraktaroglu L."/>
            <person name="Beasley E.M."/>
            <person name="Beeson K.Y."/>
            <person name="Benos P.V."/>
            <person name="Berman B.P."/>
            <person name="Bhandari D."/>
            <person name="Bolshakov S."/>
            <person name="Borkova D."/>
            <person name="Botchan M.R."/>
            <person name="Bouck J."/>
            <person name="Brokstein P."/>
            <person name="Brottier P."/>
            <person name="Burtis K.C."/>
            <person name="Busam D.A."/>
            <person name="Butler H."/>
            <person name="Cadieu E."/>
            <person name="Center A."/>
            <person name="Chandra I."/>
            <person name="Cherry J.M."/>
            <person name="Cawley S."/>
            <person name="Dahlke C."/>
            <person name="Davenport L.B."/>
            <person name="Davies P."/>
            <person name="de Pablos B."/>
            <person name="Delcher A."/>
            <person name="Deng Z."/>
            <person name="Mays A.D."/>
            <person name="Dew I."/>
            <person name="Dietz S.M."/>
            <person name="Dodson K."/>
            <person name="Doup L.E."/>
            <person name="Downes M."/>
            <person name="Dugan-Rocha S."/>
            <person name="Dunkov B.C."/>
            <person name="Dunn P."/>
            <person name="Durbin K.J."/>
            <person name="Evangelista C.C."/>
            <person name="Ferraz C."/>
            <person name="Ferriera S."/>
            <person name="Fleischmann W."/>
            <person name="Fosler C."/>
            <person name="Gabrielian A.E."/>
            <person name="Garg N.S."/>
            <person name="Gelbart W.M."/>
            <person name="Glasser K."/>
            <person name="Glodek A."/>
            <person name="Gong F."/>
            <person name="Gorrell J.H."/>
            <person name="Gu Z."/>
            <person name="Guan P."/>
            <person name="Harris M."/>
            <person name="Harris N.L."/>
            <person name="Harvey D.A."/>
            <person name="Heiman T.J."/>
            <person name="Hernandez J.R."/>
            <person name="Houck J."/>
            <person name="Hostin D."/>
            <person name="Houston K.A."/>
            <person name="Howland T.J."/>
            <person name="Wei M.-H."/>
            <person name="Ibegwam C."/>
            <person name="Jalali M."/>
            <person name="Kalush F."/>
            <person name="Karpen G.H."/>
            <person name="Ke Z."/>
            <person name="Kennison J.A."/>
            <person name="Ketchum K.A."/>
            <person name="Kimmel B.E."/>
            <person name="Kodira C.D."/>
            <person name="Kraft C.L."/>
            <person name="Kravitz S."/>
            <person name="Kulp D."/>
            <person name="Lai Z."/>
            <person name="Lasko P."/>
            <person name="Lei Y."/>
            <person name="Levitsky A.A."/>
            <person name="Li J.H."/>
            <person name="Li Z."/>
            <person name="Liang Y."/>
            <person name="Lin X."/>
            <person name="Liu X."/>
            <person name="Mattei B."/>
            <person name="McIntosh T.C."/>
            <person name="McLeod M.P."/>
            <person name="McPherson D."/>
            <person name="Merkulov G."/>
            <person name="Milshina N.V."/>
            <person name="Mobarry C."/>
            <person name="Morris J."/>
            <person name="Moshrefi A."/>
            <person name="Mount S.M."/>
            <person name="Moy M."/>
            <person name="Murphy B."/>
            <person name="Murphy L."/>
            <person name="Muzny D.M."/>
            <person name="Nelson D.L."/>
            <person name="Nelson D.R."/>
            <person name="Nelson K.A."/>
            <person name="Nixon K."/>
            <person name="Nusskern D.R."/>
            <person name="Pacleb J.M."/>
            <person name="Palazzolo M."/>
            <person name="Pittman G.S."/>
            <person name="Pan S."/>
            <person name="Pollard J."/>
            <person name="Puri V."/>
            <person name="Reese M.G."/>
            <person name="Reinert K."/>
            <person name="Remington K."/>
            <person name="Saunders R.D.C."/>
            <person name="Scheeler F."/>
            <person name="Shen H."/>
            <person name="Shue B.C."/>
            <person name="Siden-Kiamos I."/>
            <person name="Simpson M."/>
            <person name="Skupski M.P."/>
            <person name="Smith T.J."/>
            <person name="Spier E."/>
            <person name="Spradling A.C."/>
            <person name="Stapleton M."/>
            <person name="Strong R."/>
            <person name="Sun E."/>
            <person name="Svirskas R."/>
            <person name="Tector C."/>
            <person name="Turner R."/>
            <person name="Venter E."/>
            <person name="Wang A.H."/>
            <person name="Wang X."/>
            <person name="Wang Z.-Y."/>
            <person name="Wassarman D.A."/>
            <person name="Weinstock G.M."/>
            <person name="Weissenbach J."/>
            <person name="Williams S.M."/>
            <person name="Woodage T."/>
            <person name="Worley K.C."/>
            <person name="Wu D."/>
            <person name="Yang S."/>
            <person name="Yao Q.A."/>
            <person name="Ye J."/>
            <person name="Yeh R.-F."/>
            <person name="Zaveri J.S."/>
            <person name="Zhan M."/>
            <person name="Zhang G."/>
            <person name="Zhao Q."/>
            <person name="Zheng L."/>
            <person name="Zheng X.H."/>
            <person name="Zhong F.N."/>
            <person name="Zhong W."/>
            <person name="Zhou X."/>
            <person name="Zhu S.C."/>
            <person name="Zhu X."/>
            <person name="Smith H.O."/>
            <person name="Gibbs R.A."/>
            <person name="Myers E.W."/>
            <person name="Rubin G.M."/>
            <person name="Venter J.C."/>
        </authorList>
    </citation>
    <scope>NUCLEOTIDE SEQUENCE [LARGE SCALE GENOMIC DNA]</scope>
    <source>
        <strain evidence="4">Berkeley</strain>
    </source>
</reference>
<reference evidence="7 9" key="2">
    <citation type="journal article" date="2002" name="Genome Biol.">
        <title>Annotation of the Drosophila melanogaster euchromatic genome: a systematic review.</title>
        <authorList>
            <person name="Misra S."/>
            <person name="Crosby M.A."/>
            <person name="Mungall C.J."/>
            <person name="Matthews B.B."/>
            <person name="Campbell K.S."/>
            <person name="Hradecky P."/>
            <person name="Huang Y."/>
            <person name="Kaminker J.S."/>
            <person name="Millburn G.H."/>
            <person name="Prochnik S.E."/>
            <person name="Smith C.D."/>
            <person name="Tupy J.L."/>
            <person name="Whitfield E.J."/>
            <person name="Bayraktaroglu L."/>
            <person name="Berman B.P."/>
            <person name="Bettencourt B.R."/>
            <person name="Celniker S.E."/>
            <person name="de Grey A.D.N.J."/>
            <person name="Drysdale R.A."/>
            <person name="Harris N.L."/>
            <person name="Richter J."/>
            <person name="Russo S."/>
            <person name="Schroeder A.J."/>
            <person name="Shu S.Q."/>
            <person name="Stapleton M."/>
            <person name="Yamada C."/>
            <person name="Ashburner M."/>
            <person name="Gelbart W.M."/>
            <person name="Rubin G.M."/>
            <person name="Lewis S.E."/>
        </authorList>
    </citation>
    <scope>GENOME REANNOTATION</scope>
    <source>
        <strain>Berkeley</strain>
    </source>
</reference>
<reference evidence="7 8" key="3">
    <citation type="journal article" date="2002" name="Genome Biol.">
        <title>A Drosophila full-length cDNA resource.</title>
        <authorList>
            <person name="Stapleton M."/>
            <person name="Carlson J.W."/>
            <person name="Brokstein P."/>
            <person name="Yu C."/>
            <person name="Champe M."/>
            <person name="George R.A."/>
            <person name="Guarin H."/>
            <person name="Kronmiller B."/>
            <person name="Pacleb J.M."/>
            <person name="Park S."/>
            <person name="Wan K.H."/>
            <person name="Rubin G.M."/>
            <person name="Celniker S.E."/>
        </authorList>
    </citation>
    <scope>NUCLEOTIDE SEQUENCE [LARGE SCALE MRNA] OF 159-568</scope>
    <scope>RNA EDITING OF POSITION 516</scope>
    <source>
        <strain evidence="8">Berkeley</strain>
        <tissue evidence="5">Head</tissue>
    </source>
</reference>
<reference evidence="7" key="4">
    <citation type="journal article" date="2006" name="RNA">
        <title>RNA editing in Drosophila melanogaster: new targets and functional consequences.</title>
        <authorList>
            <person name="Stapleton M."/>
            <person name="Carlson J.W."/>
            <person name="Celniker S.E."/>
        </authorList>
    </citation>
    <scope>RNA EDITING OF POSITION 516</scope>
</reference>
<organism>
    <name type="scientific">Drosophila melanogaster</name>
    <name type="common">Fruit fly</name>
    <dbReference type="NCBI Taxonomy" id="7227"/>
    <lineage>
        <taxon>Eukaryota</taxon>
        <taxon>Metazoa</taxon>
        <taxon>Ecdysozoa</taxon>
        <taxon>Arthropoda</taxon>
        <taxon>Hexapoda</taxon>
        <taxon>Insecta</taxon>
        <taxon>Pterygota</taxon>
        <taxon>Neoptera</taxon>
        <taxon>Endopterygota</taxon>
        <taxon>Diptera</taxon>
        <taxon>Brachycera</taxon>
        <taxon>Muscomorpha</taxon>
        <taxon>Ephydroidea</taxon>
        <taxon>Drosophilidae</taxon>
        <taxon>Drosophila</taxon>
        <taxon>Sophophora</taxon>
    </lineage>
</organism>
<name>NCKXH_DROME</name>
<accession>Q9VN12</accession>
<accession>Q8IPM4</accession>
<accession>Q8SXA2</accession>
<keyword id="KW-0050">Antiport</keyword>
<keyword id="KW-0106">Calcium</keyword>
<keyword id="KW-0109">Calcium transport</keyword>
<keyword id="KW-0406">Ion transport</keyword>
<keyword id="KW-0472">Membrane</keyword>
<keyword id="KW-0630">Potassium</keyword>
<keyword id="KW-0633">Potassium transport</keyword>
<keyword id="KW-1185">Reference proteome</keyword>
<keyword id="KW-0677">Repeat</keyword>
<keyword id="KW-0691">RNA editing</keyword>
<keyword id="KW-0732">Signal</keyword>
<keyword id="KW-0915">Sodium</keyword>
<keyword id="KW-0739">Sodium transport</keyword>
<keyword id="KW-0769">Symport</keyword>
<keyword id="KW-0812">Transmembrane</keyword>
<keyword id="KW-1133">Transmembrane helix</keyword>
<keyword id="KW-0813">Transport</keyword>
<feature type="signal peptide" evidence="2">
    <location>
        <begin position="1"/>
        <end position="21"/>
    </location>
</feature>
<feature type="chain" id="PRO_0000280226" description="Probable sodium/potassium/calcium exchanger CG1090" evidence="2">
    <location>
        <begin position="22"/>
        <end position="633"/>
    </location>
</feature>
<feature type="topological domain" description="Extracellular" evidence="7">
    <location>
        <begin position="22"/>
        <end position="111"/>
    </location>
</feature>
<feature type="transmembrane region" description="Helical" evidence="2">
    <location>
        <begin position="112"/>
        <end position="132"/>
    </location>
</feature>
<feature type="topological domain" description="Cytoplasmic" evidence="7">
    <location>
        <begin position="133"/>
        <end position="157"/>
    </location>
</feature>
<feature type="transmembrane region" description="Helical" evidence="2">
    <location>
        <begin position="158"/>
        <end position="178"/>
    </location>
</feature>
<feature type="topological domain" description="Extracellular" evidence="7">
    <location>
        <begin position="179"/>
        <end position="181"/>
    </location>
</feature>
<feature type="transmembrane region" description="Helical" evidence="2">
    <location>
        <begin position="182"/>
        <end position="202"/>
    </location>
</feature>
<feature type="topological domain" description="Cytoplasmic" evidence="7">
    <location>
        <begin position="203"/>
        <end position="220"/>
    </location>
</feature>
<feature type="transmembrane region" description="Helical" evidence="2">
    <location>
        <begin position="221"/>
        <end position="241"/>
    </location>
</feature>
<feature type="transmembrane region" description="Helical" evidence="2">
    <location>
        <begin position="242"/>
        <end position="262"/>
    </location>
</feature>
<feature type="topological domain" description="Extracellular" evidence="7">
    <location>
        <begin position="263"/>
        <end position="427"/>
    </location>
</feature>
<feature type="transmembrane region" description="Helical" evidence="2">
    <location>
        <begin position="428"/>
        <end position="448"/>
    </location>
</feature>
<feature type="topological domain" description="Cytoplasmic" evidence="7">
    <location>
        <begin position="449"/>
        <end position="468"/>
    </location>
</feature>
<feature type="transmembrane region" description="Helical" evidence="2">
    <location>
        <begin position="469"/>
        <end position="489"/>
    </location>
</feature>
<feature type="topological domain" description="Extracellular" evidence="7">
    <location>
        <begin position="490"/>
        <end position="500"/>
    </location>
</feature>
<feature type="transmembrane region" description="Helical" evidence="2">
    <location>
        <begin position="501"/>
        <end position="521"/>
    </location>
</feature>
<feature type="topological domain" description="Cytoplasmic" evidence="7">
    <location>
        <begin position="522"/>
        <end position="535"/>
    </location>
</feature>
<feature type="transmembrane region" description="Helical" evidence="2">
    <location>
        <begin position="536"/>
        <end position="556"/>
    </location>
</feature>
<feature type="topological domain" description="Extracellular" evidence="7">
    <location>
        <begin position="557"/>
        <end position="568"/>
    </location>
</feature>
<feature type="transmembrane region" description="Helical" evidence="2">
    <location>
        <begin position="569"/>
        <end position="589"/>
    </location>
</feature>
<feature type="topological domain" description="Cytoplasmic" evidence="7">
    <location>
        <begin position="590"/>
        <end position="597"/>
    </location>
</feature>
<feature type="transmembrane region" description="Helical" evidence="2">
    <location>
        <begin position="598"/>
        <end position="618"/>
    </location>
</feature>
<feature type="topological domain" description="Extracellular" evidence="7">
    <location>
        <begin position="619"/>
        <end position="633"/>
    </location>
</feature>
<feature type="repeat" description="Alpha-1" evidence="2">
    <location>
        <begin position="153"/>
        <end position="193"/>
    </location>
</feature>
<feature type="repeat" description="Alpha-2" evidence="2">
    <location>
        <begin position="506"/>
        <end position="537"/>
    </location>
</feature>
<feature type="region of interest" description="Disordered" evidence="3">
    <location>
        <begin position="298"/>
        <end position="422"/>
    </location>
</feature>
<feature type="compositionally biased region" description="Polar residues" evidence="3">
    <location>
        <begin position="298"/>
        <end position="310"/>
    </location>
</feature>
<feature type="compositionally biased region" description="Polar residues" evidence="3">
    <location>
        <begin position="320"/>
        <end position="333"/>
    </location>
</feature>
<feature type="compositionally biased region" description="Polar residues" evidence="3">
    <location>
        <begin position="395"/>
        <end position="405"/>
    </location>
</feature>
<feature type="compositionally biased region" description="Basic and acidic residues" evidence="3">
    <location>
        <begin position="411"/>
        <end position="422"/>
    </location>
</feature>
<feature type="sequence variant" description="In RNA edited version." evidence="6">
    <original>S</original>
    <variation>G</variation>
    <location>
        <position position="516"/>
    </location>
</feature>
<dbReference type="EMBL" id="AE014297">
    <property type="protein sequence ID" value="AAF52139.3"/>
    <property type="molecule type" value="Genomic_DNA"/>
</dbReference>
<dbReference type="EMBL" id="AE014297">
    <property type="protein sequence ID" value="AAN13306.4"/>
    <property type="molecule type" value="Genomic_DNA"/>
</dbReference>
<dbReference type="EMBL" id="AY094726">
    <property type="protein sequence ID" value="AAM11079.1"/>
    <property type="status" value="ALT_SEQ"/>
    <property type="molecule type" value="mRNA"/>
</dbReference>
<dbReference type="RefSeq" id="NP_001262252.1">
    <property type="nucleotide sequence ID" value="NM_001275323.1"/>
</dbReference>
<dbReference type="RefSeq" id="NP_649459.4">
    <property type="nucleotide sequence ID" value="NM_141202.4"/>
</dbReference>
<dbReference type="RefSeq" id="NP_730819.2">
    <property type="nucleotide sequence ID" value="NM_164343.2"/>
</dbReference>
<dbReference type="BioGRID" id="65771">
    <property type="interactions" value="1"/>
</dbReference>
<dbReference type="FunCoup" id="Q9VN12">
    <property type="interactions" value="46"/>
</dbReference>
<dbReference type="STRING" id="7227.FBpp0307190"/>
<dbReference type="PaxDb" id="7227-FBpp0304720"/>
<dbReference type="EnsemblMetazoa" id="FBtr0335201">
    <property type="protein sequence ID" value="FBpp0307188"/>
    <property type="gene ID" value="FBgn0037238"/>
</dbReference>
<dbReference type="EnsemblMetazoa" id="FBtr0335202">
    <property type="protein sequence ID" value="FBpp0307189"/>
    <property type="gene ID" value="FBgn0037238"/>
</dbReference>
<dbReference type="EnsemblMetazoa" id="FBtr0335203">
    <property type="protein sequence ID" value="FBpp0307190"/>
    <property type="gene ID" value="FBgn0037238"/>
</dbReference>
<dbReference type="GeneID" id="40551"/>
<dbReference type="KEGG" id="dme:Dmel_CG1090"/>
<dbReference type="UCSC" id="CG1090-RA">
    <property type="organism name" value="d. melanogaster"/>
</dbReference>
<dbReference type="AGR" id="FB:FBgn0037238"/>
<dbReference type="FlyBase" id="FBgn0037238">
    <property type="gene designation" value="CG1090"/>
</dbReference>
<dbReference type="VEuPathDB" id="VectorBase:FBgn0037238"/>
<dbReference type="eggNOG" id="KOG1307">
    <property type="taxonomic scope" value="Eukaryota"/>
</dbReference>
<dbReference type="GeneTree" id="ENSGT01030000234532"/>
<dbReference type="HOGENOM" id="CLU_007948_5_2_1"/>
<dbReference type="InParanoid" id="Q9VN12"/>
<dbReference type="OMA" id="YPFTFLI"/>
<dbReference type="OrthoDB" id="2127281at2759"/>
<dbReference type="Reactome" id="R-DME-425561">
    <property type="pathway name" value="Sodium/Calcium exchangers"/>
</dbReference>
<dbReference type="BioGRID-ORCS" id="40551">
    <property type="hits" value="0 hits in 3 CRISPR screens"/>
</dbReference>
<dbReference type="GenomeRNAi" id="40551"/>
<dbReference type="PRO" id="PR:Q9VN12"/>
<dbReference type="Proteomes" id="UP000000803">
    <property type="component" value="Chromosome 3R"/>
</dbReference>
<dbReference type="Bgee" id="FBgn0037238">
    <property type="expression patterns" value="Expressed in lamina monopolar neuron L1 (Drosophila) in insect head and 161 other cell types or tissues"/>
</dbReference>
<dbReference type="ExpressionAtlas" id="Q9VN12">
    <property type="expression patterns" value="baseline and differential"/>
</dbReference>
<dbReference type="GO" id="GO:0016020">
    <property type="term" value="C:membrane"/>
    <property type="evidence" value="ECO:0000250"/>
    <property type="project" value="UniProtKB"/>
</dbReference>
<dbReference type="GO" id="GO:0005886">
    <property type="term" value="C:plasma membrane"/>
    <property type="evidence" value="ECO:0000318"/>
    <property type="project" value="GO_Central"/>
</dbReference>
<dbReference type="GO" id="GO:0005262">
    <property type="term" value="F:calcium channel activity"/>
    <property type="evidence" value="ECO:0000318"/>
    <property type="project" value="GO_Central"/>
</dbReference>
<dbReference type="GO" id="GO:0008273">
    <property type="term" value="F:calcium, potassium:sodium antiporter activity"/>
    <property type="evidence" value="ECO:0000250"/>
    <property type="project" value="UniProtKB"/>
</dbReference>
<dbReference type="GO" id="GO:0015293">
    <property type="term" value="F:symporter activity"/>
    <property type="evidence" value="ECO:0007669"/>
    <property type="project" value="UniProtKB-KW"/>
</dbReference>
<dbReference type="GO" id="GO:0070588">
    <property type="term" value="P:calcium ion transmembrane transport"/>
    <property type="evidence" value="ECO:0000318"/>
    <property type="project" value="GO_Central"/>
</dbReference>
<dbReference type="GO" id="GO:0006816">
    <property type="term" value="P:calcium ion transport"/>
    <property type="evidence" value="ECO:0000250"/>
    <property type="project" value="UniProtKB"/>
</dbReference>
<dbReference type="GO" id="GO:0006874">
    <property type="term" value="P:intracellular calcium ion homeostasis"/>
    <property type="evidence" value="ECO:0000318"/>
    <property type="project" value="GO_Central"/>
</dbReference>
<dbReference type="GO" id="GO:0006814">
    <property type="term" value="P:sodium ion transport"/>
    <property type="evidence" value="ECO:0000250"/>
    <property type="project" value="UniProtKB"/>
</dbReference>
<dbReference type="FunFam" id="1.20.1420.30:FF:000018">
    <property type="entry name" value="Sodium/potassium/calcium exchanger 2"/>
    <property type="match status" value="1"/>
</dbReference>
<dbReference type="FunFam" id="1.20.1420.30:FF:000009">
    <property type="entry name" value="sodium/potassium/calcium exchanger 5 isoform X2"/>
    <property type="match status" value="1"/>
</dbReference>
<dbReference type="Gene3D" id="1.20.1420.30">
    <property type="entry name" value="NCX, central ion-binding region"/>
    <property type="match status" value="2"/>
</dbReference>
<dbReference type="InterPro" id="IPR004481">
    <property type="entry name" value="K/Na/Ca-exchanger"/>
</dbReference>
<dbReference type="InterPro" id="IPR004837">
    <property type="entry name" value="NaCa_Exmemb"/>
</dbReference>
<dbReference type="InterPro" id="IPR044880">
    <property type="entry name" value="NCX_ion-bd_dom_sf"/>
</dbReference>
<dbReference type="NCBIfam" id="TIGR00367">
    <property type="entry name" value="calcium/sodium antiporter"/>
    <property type="match status" value="1"/>
</dbReference>
<dbReference type="PANTHER" id="PTHR10846">
    <property type="entry name" value="SODIUM/POTASSIUM/CALCIUM EXCHANGER"/>
    <property type="match status" value="1"/>
</dbReference>
<dbReference type="PANTHER" id="PTHR10846:SF74">
    <property type="entry name" value="SODIUM_POTASSIUM_CALCIUM EXCHANGER CG1090-RELATED"/>
    <property type="match status" value="1"/>
</dbReference>
<dbReference type="Pfam" id="PF01699">
    <property type="entry name" value="Na_Ca_ex"/>
    <property type="match status" value="2"/>
</dbReference>
<sequence length="633" mass="69570">MWNMGLLFLIYYCVSIYSAKGDTKDGQVLPLDVGALAEDAGDAEANGEDTPERNSESSVLDTTLAFEPQASTQSTPIHGAVPTWRPKRDNCTPPAIEQFPQPLMNKWARQHGGLILHILVAVFTFFGLAIVCDEYFVASLDRLCEELKLSPDVAGATFMAAGSSAPELATVVIGVFFAKDDIGISGVIGSAVFNIMFVISVCALCSGTVCQLNWWPLVRDCFFYCVSILVMLIIIFNDVISCFESVVMLLCYVGYCVALHFNTELERWALGLNLPFKLPSKEEQSALVTYKNVPEGSYTQESVGQTQGQKATDDSETRSAKPQSDYQDYSDPNPTWDPNAAWGDESQPNPVANPPPVDDWGMGHSGQENMGYHADQPESVVTGDGPPAAVKSGGQVVSTQATSAGGNDYYKSTDKQREPRRDPLLRPMEGGLPALVSWYVVYPIHFLCKKTMPDCRQEQYRNWYPFTFLMSMVWISFYSYFMVWMITVIGSTLAIPDTVMGLTFVAAGVSVPDALSSIAVIKEGFGDMAVSNAIGSNVFDILVCLGLPWFIQTAIIKPGSHVNVISKGLAYSTLSLFSTVVFLILSTHLNGWKLDKRLGIILMVWYLFFITLASLYELNVFGYMNPPECPSTY</sequence>
<proteinExistence type="evidence at transcript level"/>